<sequence>MASLARAMLALLALYAAAIAAAPSTTTALDTTPNGGGGGNSSEGELSPSPPPTPAPASPEAGAVSTPPVPPPSVSRRKPPRNNNRTRVHGDKATAHGRKRIVCRERLFSARVGDAVSFGCAVFPRAGETFEVRFYRRGRFRSPDADPEYFDEPPRPELPRERLLFSSANASLAHADALAPVVVEGERATVANVSGEVSVRVAAADAETEGVYTWRVLSANGTEVRSANVSLLLYSQPEFGLSAPPVLFGEPFRAVCVVRDYYPRRSVRLRWFADEHPVDAAFVTNSTVADELGRRTRVSVVNVTRADVPGLAAADAADALAPSLRCEAVWYRDSVASQRFSEALRPHVYHPAAVSVRFVEGFAVCDGLCVPPEARLAWSDHAADTVYHLGACAEHPGLLNVRSARPLSDLDGPVDYTCRLEGLPSQLPVFEDTQRYDASPASVSWPVVSSMIVVIAGIGILAIVLVIMATCVYYRQAGP</sequence>
<organism>
    <name type="scientific">Suid herpesvirus 1 (strain Indiana-Funkhauser / Becker)</name>
    <name type="common">SuHV-1</name>
    <name type="synonym">Pseudorabies virus (strain Indiana-Funkhauser / Becker)</name>
    <dbReference type="NCBI Taxonomy" id="31523"/>
    <lineage>
        <taxon>Viruses</taxon>
        <taxon>Duplodnaviria</taxon>
        <taxon>Heunggongvirae</taxon>
        <taxon>Peploviricota</taxon>
        <taxon>Herviviricetes</taxon>
        <taxon>Herpesvirales</taxon>
        <taxon>Orthoherpesviridae</taxon>
        <taxon>Alphaherpesvirinae</taxon>
        <taxon>Varicellovirus</taxon>
        <taxon>Varicellovirus suidalpha1</taxon>
        <taxon>Suid herpesvirus 1</taxon>
    </lineage>
</organism>
<evidence type="ECO:0000250" key="1"/>
<evidence type="ECO:0000255" key="2"/>
<evidence type="ECO:0000256" key="3">
    <source>
        <dbReference type="SAM" id="MobiDB-lite"/>
    </source>
</evidence>
<evidence type="ECO:0000269" key="4">
    <source>
    </source>
</evidence>
<evidence type="ECO:0000305" key="5"/>
<accession>P06024</accession>
<reference key="1">
    <citation type="journal article" date="1986" name="J. Virol.">
        <title>Characterization of a pseudorabies virus glycoprotein gene with homology to herpes simplex virus type 1 and type 2 glycoprotein C.</title>
        <authorList>
            <person name="Robbins A.K."/>
            <person name="Watson R.J."/>
            <person name="Whealy M.E."/>
            <person name="Hays W.W."/>
            <person name="Enquist L.W."/>
        </authorList>
    </citation>
    <scope>NUCLEOTIDE SEQUENCE [MRNA]</scope>
</reference>
<reference key="2">
    <citation type="journal article" date="1992" name="Virus Res.">
        <title>Pseudorabies virus glycoprotein III derived from virions and infected cells binds to the third component of complement.</title>
        <authorList>
            <person name="Huemer H.P."/>
            <person name="Larcher C."/>
            <person name="Coe N.E."/>
        </authorList>
    </citation>
    <scope>INTERACTION WITH HOST C3</scope>
</reference>
<reference key="3">
    <citation type="journal article" date="1996" name="J. Virol.">
        <title>The receptor-binding domain of pseudorabies virus glycoprotein gC is composed of multiple discrete units that are functionally redundant.</title>
        <authorList>
            <person name="Flynn S.J."/>
            <person name="Ryan P."/>
        </authorList>
    </citation>
    <scope>HEPARIN BINDING DOMAIN</scope>
</reference>
<organismHost>
    <name type="scientific">Sus scrofa</name>
    <name type="common">Pig</name>
    <dbReference type="NCBI Taxonomy" id="9823"/>
</organismHost>
<dbReference type="EMBL" id="M12778">
    <property type="protein sequence ID" value="AAA47464.1"/>
    <property type="molecule type" value="mRNA"/>
</dbReference>
<dbReference type="PIR" id="A26097">
    <property type="entry name" value="VGBEPB"/>
</dbReference>
<dbReference type="IntAct" id="P06024">
    <property type="interactions" value="1"/>
</dbReference>
<dbReference type="GlyCosmos" id="P06024">
    <property type="glycosylation" value="8 sites, No reported glycans"/>
</dbReference>
<dbReference type="GO" id="GO:0016020">
    <property type="term" value="C:membrane"/>
    <property type="evidence" value="ECO:0007669"/>
    <property type="project" value="UniProtKB-KW"/>
</dbReference>
<dbReference type="GO" id="GO:0055036">
    <property type="term" value="C:virion membrane"/>
    <property type="evidence" value="ECO:0007669"/>
    <property type="project" value="UniProtKB-SubCell"/>
</dbReference>
<dbReference type="GO" id="GO:0098671">
    <property type="term" value="P:adhesion receptor-mediated virion attachment to host cell"/>
    <property type="evidence" value="ECO:0007669"/>
    <property type="project" value="UniProtKB-KW"/>
</dbReference>
<dbReference type="GO" id="GO:0046718">
    <property type="term" value="P:symbiont entry into host cell"/>
    <property type="evidence" value="ECO:0007669"/>
    <property type="project" value="UniProtKB-KW"/>
</dbReference>
<dbReference type="GO" id="GO:0042784">
    <property type="term" value="P:symbiont-mediated suppression of host complement activation"/>
    <property type="evidence" value="ECO:0007669"/>
    <property type="project" value="UniProtKB-KW"/>
</dbReference>
<dbReference type="InterPro" id="IPR001038">
    <property type="entry name" value="GA_GC"/>
</dbReference>
<dbReference type="InterPro" id="IPR036179">
    <property type="entry name" value="Ig-like_dom_sf"/>
</dbReference>
<dbReference type="Pfam" id="PF02124">
    <property type="entry name" value="Marek_A"/>
    <property type="match status" value="1"/>
</dbReference>
<dbReference type="PRINTS" id="PR00668">
    <property type="entry name" value="GLYCPROTEINC"/>
</dbReference>
<dbReference type="SUPFAM" id="SSF48726">
    <property type="entry name" value="Immunoglobulin"/>
    <property type="match status" value="1"/>
</dbReference>
<proteinExistence type="evidence at protein level"/>
<feature type="signal peptide">
    <location>
        <begin position="1"/>
        <end position="22"/>
    </location>
</feature>
<feature type="chain" id="PRO_0000038212" description="Envelope glycoprotein C homolog">
    <location>
        <begin position="23"/>
        <end position="479"/>
    </location>
</feature>
<feature type="topological domain" description="Virion surface" evidence="2">
    <location>
        <begin position="23"/>
        <end position="451"/>
    </location>
</feature>
<feature type="transmembrane region" description="Helical" evidence="2">
    <location>
        <begin position="452"/>
        <end position="472"/>
    </location>
</feature>
<feature type="topological domain" description="Cytoplasmic" evidence="2">
    <location>
        <begin position="473"/>
        <end position="479"/>
    </location>
</feature>
<feature type="region of interest" description="Disordered" evidence="3">
    <location>
        <begin position="26"/>
        <end position="96"/>
    </location>
</feature>
<feature type="region of interest" description="HDB1">
    <location>
        <begin position="75"/>
        <end position="82"/>
    </location>
</feature>
<feature type="region of interest" description="HDB2">
    <location>
        <begin position="95"/>
        <end position="101"/>
    </location>
</feature>
<feature type="region of interest" description="HDB3">
    <location>
        <begin position="135"/>
        <end position="140"/>
    </location>
</feature>
<feature type="compositionally biased region" description="Pro residues" evidence="3">
    <location>
        <begin position="48"/>
        <end position="57"/>
    </location>
</feature>
<feature type="compositionally biased region" description="Basic residues" evidence="3">
    <location>
        <begin position="75"/>
        <end position="87"/>
    </location>
</feature>
<feature type="glycosylation site" description="N-linked (GlcNAc...) asparagine; by host" evidence="2">
    <location>
        <position position="40"/>
    </location>
</feature>
<feature type="glycosylation site" description="N-linked (GlcNAc...) asparagine; by host" evidence="2">
    <location>
        <position position="84"/>
    </location>
</feature>
<feature type="glycosylation site" description="N-linked (GlcNAc...) asparagine; by host" evidence="2">
    <location>
        <position position="169"/>
    </location>
</feature>
<feature type="glycosylation site" description="N-linked (GlcNAc...) asparagine; by host" evidence="2">
    <location>
        <position position="192"/>
    </location>
</feature>
<feature type="glycosylation site" description="N-linked (GlcNAc...) asparagine; by host" evidence="2">
    <location>
        <position position="220"/>
    </location>
</feature>
<feature type="glycosylation site" description="N-linked (GlcNAc...) asparagine; by host" evidence="2">
    <location>
        <position position="228"/>
    </location>
</feature>
<feature type="glycosylation site" description="N-linked (GlcNAc...) asparagine; by host" evidence="2">
    <location>
        <position position="285"/>
    </location>
</feature>
<feature type="glycosylation site" description="N-linked (GlcNAc...) asparagine; by host" evidence="2">
    <location>
        <position position="302"/>
    </location>
</feature>
<feature type="disulfide bond" evidence="1">
    <location>
        <begin position="103"/>
        <end position="120"/>
    </location>
</feature>
<feature type="disulfide bond" evidence="1">
    <location>
        <begin position="256"/>
        <end position="326"/>
    </location>
</feature>
<feature type="disulfide bond" evidence="1">
    <location>
        <begin position="365"/>
        <end position="418"/>
    </location>
</feature>
<feature type="disulfide bond" evidence="1">
    <location>
        <begin position="369"/>
        <end position="392"/>
    </location>
</feature>
<keyword id="KW-1015">Disulfide bond</keyword>
<keyword id="KW-0325">Glycoprotein</keyword>
<keyword id="KW-0945">Host-virus interaction</keyword>
<keyword id="KW-1087">Inhibition of host complement factors by virus</keyword>
<keyword id="KW-0472">Membrane</keyword>
<keyword id="KW-0732">Signal</keyword>
<keyword id="KW-0812">Transmembrane</keyword>
<keyword id="KW-1133">Transmembrane helix</keyword>
<keyword id="KW-1233">Viral attachment to host adhesion receptor</keyword>
<keyword id="KW-1161">Viral attachment to host cell</keyword>
<keyword id="KW-0899">Viral immunoevasion</keyword>
<keyword id="KW-0946">Virion</keyword>
<keyword id="KW-1160">Virus entry into host cell</keyword>
<protein>
    <recommendedName>
        <fullName>Envelope glycoprotein C homolog</fullName>
    </recommendedName>
    <alternativeName>
        <fullName>Glycoprotein GIII</fullName>
    </alternativeName>
</protein>
<name>GC_SUHVF</name>
<gene>
    <name type="primary">gC</name>
</gene>
<comment type="function">
    <text evidence="1">Essential for the initial attachment to heparan sulfate moieties of the host cell surface proteoglycans (By similarity). Plays also a role in host immune evasion by inhibiting the host complement cascade activation.</text>
</comment>
<comment type="subunit">
    <text evidence="4">Interacts with host complement component C3; this interaction inhibits host immune response by disregulating complement cascade.</text>
</comment>
<comment type="subcellular location">
    <subcellularLocation>
        <location evidence="5">Virion membrane</location>
        <topology evidence="5">Single-pass membrane protein</topology>
    </subcellularLocation>
</comment>
<comment type="domain">
    <text>The three heparin-binding domains (HDB1, HDB2 and HDB3) mediate virus attachment through specific arrangements of basic residues.</text>
</comment>
<comment type="similarity">
    <text evidence="5">Belongs to the herpesviridae glycoprotein C family.</text>
</comment>